<feature type="chain" id="PRO_0000349852" description="tRNA-specific 2-thiouridylase MnmA">
    <location>
        <begin position="1"/>
        <end position="360"/>
    </location>
</feature>
<feature type="region of interest" description="Interaction with tRNA" evidence="1">
    <location>
        <begin position="159"/>
        <end position="161"/>
    </location>
</feature>
<feature type="active site" description="Nucleophile" evidence="1">
    <location>
        <position position="109"/>
    </location>
</feature>
<feature type="active site" description="Cysteine persulfide intermediate" evidence="1">
    <location>
        <position position="210"/>
    </location>
</feature>
<feature type="binding site" evidence="1">
    <location>
        <begin position="10"/>
        <end position="17"/>
    </location>
    <ligand>
        <name>ATP</name>
        <dbReference type="ChEBI" id="CHEBI:30616"/>
    </ligand>
</feature>
<feature type="binding site" evidence="1">
    <location>
        <position position="36"/>
    </location>
    <ligand>
        <name>ATP</name>
        <dbReference type="ChEBI" id="CHEBI:30616"/>
    </ligand>
</feature>
<feature type="binding site" evidence="1">
    <location>
        <position position="135"/>
    </location>
    <ligand>
        <name>ATP</name>
        <dbReference type="ChEBI" id="CHEBI:30616"/>
    </ligand>
</feature>
<feature type="site" description="Interaction with tRNA" evidence="1">
    <location>
        <position position="136"/>
    </location>
</feature>
<feature type="site" description="Interaction with tRNA" evidence="1">
    <location>
        <position position="343"/>
    </location>
</feature>
<feature type="disulfide bond" description="Alternate" evidence="1">
    <location>
        <begin position="109"/>
        <end position="210"/>
    </location>
</feature>
<name>MNMA_ENDTX</name>
<sequence>METEMKILIGLSGGVDSAVAAYLLKKQGYEVTGTTMSIWDNFLPAPKTKVNDSCLGPENENIETAHKIADFLTIPLYVTDCSGEYKKVVLENFRNEYKEGRTPNPCIRCNAYIKFGILPAAVKKTGLSFDKFATGHYANIGFDSSTNMYKLYKAADLNKDQTYFLYRLTQKTLSETIFPLGIYTKEQVRNIAKKIGLPSAEKPDSQDFYCGDYNDILQFPANPGNIVDKNGRVLGKHNGIWNYTIGKRKGLGLLGGTKDPLYVINISAKQNMVTIGTKEDLYSSSLTAKKVSWCSILPPKKTIEATAKIRRQHKPEKAFIIPQEDSSVKVEFAQPQMSVTAGQSIVFYKDDTVLGGGVII</sequence>
<dbReference type="EC" id="2.8.1.13"/>
<dbReference type="EMBL" id="AP009510">
    <property type="protein sequence ID" value="BAG13821.1"/>
    <property type="molecule type" value="Genomic_DNA"/>
</dbReference>
<dbReference type="SMR" id="B1GZY9"/>
<dbReference type="STRING" id="471821.TGRD_338"/>
<dbReference type="KEGG" id="rsd:TGRD_338"/>
<dbReference type="PATRIC" id="fig|471821.5.peg.544"/>
<dbReference type="HOGENOM" id="CLU_035188_0_0_0"/>
<dbReference type="Proteomes" id="UP000001691">
    <property type="component" value="Chromosome"/>
</dbReference>
<dbReference type="GO" id="GO:0005737">
    <property type="term" value="C:cytoplasm"/>
    <property type="evidence" value="ECO:0007669"/>
    <property type="project" value="UniProtKB-SubCell"/>
</dbReference>
<dbReference type="GO" id="GO:0005524">
    <property type="term" value="F:ATP binding"/>
    <property type="evidence" value="ECO:0007669"/>
    <property type="project" value="UniProtKB-KW"/>
</dbReference>
<dbReference type="GO" id="GO:0000049">
    <property type="term" value="F:tRNA binding"/>
    <property type="evidence" value="ECO:0007669"/>
    <property type="project" value="UniProtKB-KW"/>
</dbReference>
<dbReference type="GO" id="GO:0103016">
    <property type="term" value="F:tRNA-uridine 2-sulfurtransferase activity"/>
    <property type="evidence" value="ECO:0007669"/>
    <property type="project" value="UniProtKB-EC"/>
</dbReference>
<dbReference type="GO" id="GO:0002143">
    <property type="term" value="P:tRNA wobble position uridine thiolation"/>
    <property type="evidence" value="ECO:0007669"/>
    <property type="project" value="TreeGrafter"/>
</dbReference>
<dbReference type="CDD" id="cd01998">
    <property type="entry name" value="MnmA_TRMU-like"/>
    <property type="match status" value="1"/>
</dbReference>
<dbReference type="FunFam" id="2.30.30.280:FF:000001">
    <property type="entry name" value="tRNA-specific 2-thiouridylase MnmA"/>
    <property type="match status" value="1"/>
</dbReference>
<dbReference type="Gene3D" id="2.30.30.280">
    <property type="entry name" value="Adenine nucleotide alpha hydrolases-like domains"/>
    <property type="match status" value="1"/>
</dbReference>
<dbReference type="Gene3D" id="3.40.50.620">
    <property type="entry name" value="HUPs"/>
    <property type="match status" value="1"/>
</dbReference>
<dbReference type="Gene3D" id="2.40.30.10">
    <property type="entry name" value="Translation factors"/>
    <property type="match status" value="1"/>
</dbReference>
<dbReference type="HAMAP" id="MF_00144">
    <property type="entry name" value="tRNA_thiouridyl_MnmA"/>
    <property type="match status" value="1"/>
</dbReference>
<dbReference type="InterPro" id="IPR004506">
    <property type="entry name" value="MnmA-like"/>
</dbReference>
<dbReference type="InterPro" id="IPR046885">
    <property type="entry name" value="MnmA-like_C"/>
</dbReference>
<dbReference type="InterPro" id="IPR046884">
    <property type="entry name" value="MnmA-like_central"/>
</dbReference>
<dbReference type="InterPro" id="IPR023382">
    <property type="entry name" value="MnmA-like_central_sf"/>
</dbReference>
<dbReference type="InterPro" id="IPR014729">
    <property type="entry name" value="Rossmann-like_a/b/a_fold"/>
</dbReference>
<dbReference type="NCBIfam" id="NF001138">
    <property type="entry name" value="PRK00143.1"/>
    <property type="match status" value="1"/>
</dbReference>
<dbReference type="NCBIfam" id="TIGR00420">
    <property type="entry name" value="trmU"/>
    <property type="match status" value="1"/>
</dbReference>
<dbReference type="PANTHER" id="PTHR11933:SF5">
    <property type="entry name" value="MITOCHONDRIAL TRNA-SPECIFIC 2-THIOURIDYLASE 1"/>
    <property type="match status" value="1"/>
</dbReference>
<dbReference type="PANTHER" id="PTHR11933">
    <property type="entry name" value="TRNA 5-METHYLAMINOMETHYL-2-THIOURIDYLATE -METHYLTRANSFERASE"/>
    <property type="match status" value="1"/>
</dbReference>
<dbReference type="Pfam" id="PF03054">
    <property type="entry name" value="tRNA_Me_trans"/>
    <property type="match status" value="1"/>
</dbReference>
<dbReference type="Pfam" id="PF20258">
    <property type="entry name" value="tRNA_Me_trans_C"/>
    <property type="match status" value="1"/>
</dbReference>
<dbReference type="Pfam" id="PF20259">
    <property type="entry name" value="tRNA_Me_trans_M"/>
    <property type="match status" value="1"/>
</dbReference>
<dbReference type="SUPFAM" id="SSF52402">
    <property type="entry name" value="Adenine nucleotide alpha hydrolases-like"/>
    <property type="match status" value="1"/>
</dbReference>
<comment type="function">
    <text evidence="1">Catalyzes the 2-thiolation of uridine at the wobble position (U34) of tRNA, leading to the formation of s(2)U34.</text>
</comment>
<comment type="catalytic activity">
    <reaction>
        <text>S-sulfanyl-L-cysteinyl-[protein] + uridine(34) in tRNA + AH2 + ATP = 2-thiouridine(34) in tRNA + L-cysteinyl-[protein] + A + AMP + diphosphate + H(+)</text>
        <dbReference type="Rhea" id="RHEA:47032"/>
        <dbReference type="Rhea" id="RHEA-COMP:10131"/>
        <dbReference type="Rhea" id="RHEA-COMP:11726"/>
        <dbReference type="Rhea" id="RHEA-COMP:11727"/>
        <dbReference type="Rhea" id="RHEA-COMP:11728"/>
        <dbReference type="ChEBI" id="CHEBI:13193"/>
        <dbReference type="ChEBI" id="CHEBI:15378"/>
        <dbReference type="ChEBI" id="CHEBI:17499"/>
        <dbReference type="ChEBI" id="CHEBI:29950"/>
        <dbReference type="ChEBI" id="CHEBI:30616"/>
        <dbReference type="ChEBI" id="CHEBI:33019"/>
        <dbReference type="ChEBI" id="CHEBI:61963"/>
        <dbReference type="ChEBI" id="CHEBI:65315"/>
        <dbReference type="ChEBI" id="CHEBI:87170"/>
        <dbReference type="ChEBI" id="CHEBI:456215"/>
        <dbReference type="EC" id="2.8.1.13"/>
    </reaction>
</comment>
<comment type="subcellular location">
    <subcellularLocation>
        <location evidence="1">Cytoplasm</location>
    </subcellularLocation>
</comment>
<comment type="similarity">
    <text evidence="2">Belongs to the MnmA/TRMU family.</text>
</comment>
<evidence type="ECO:0000250" key="1"/>
<evidence type="ECO:0000305" key="2"/>
<organism>
    <name type="scientific">Endomicrobium trichonymphae</name>
    <dbReference type="NCBI Taxonomy" id="1408204"/>
    <lineage>
        <taxon>Bacteria</taxon>
        <taxon>Pseudomonadati</taxon>
        <taxon>Elusimicrobiota</taxon>
        <taxon>Endomicrobiia</taxon>
        <taxon>Endomicrobiales</taxon>
        <taxon>Endomicrobiaceae</taxon>
        <taxon>Candidatus Endomicrobiellum</taxon>
    </lineage>
</organism>
<reference key="1">
    <citation type="journal article" date="2008" name="Proc. Natl. Acad. Sci. U.S.A.">
        <title>Complete genome of the uncultured termite group 1 bacteria in a single host protist cell.</title>
        <authorList>
            <person name="Hongoh Y."/>
            <person name="Sharma V.K."/>
            <person name="Prakash T."/>
            <person name="Noda S."/>
            <person name="Taylor T.D."/>
            <person name="Kudo T."/>
            <person name="Sakaki Y."/>
            <person name="Toyoda A."/>
            <person name="Hattori M."/>
            <person name="Ohkuma M."/>
        </authorList>
    </citation>
    <scope>NUCLEOTIDE SEQUENCE [LARGE SCALE GENOMIC DNA]</scope>
</reference>
<protein>
    <recommendedName>
        <fullName>tRNA-specific 2-thiouridylase MnmA</fullName>
        <ecNumber>2.8.1.13</ecNumber>
    </recommendedName>
</protein>
<keyword id="KW-0067">ATP-binding</keyword>
<keyword id="KW-0963">Cytoplasm</keyword>
<keyword id="KW-1015">Disulfide bond</keyword>
<keyword id="KW-0547">Nucleotide-binding</keyword>
<keyword id="KW-0694">RNA-binding</keyword>
<keyword id="KW-0808">Transferase</keyword>
<keyword id="KW-0819">tRNA processing</keyword>
<keyword id="KW-0820">tRNA-binding</keyword>
<proteinExistence type="inferred from homology"/>
<gene>
    <name type="primary">mnmA</name>
    <name type="ordered locus">TGRD_338</name>
</gene>
<accession>B1GZY9</accession>